<reference key="1">
    <citation type="submission" date="2007-11" db="EMBL/GenBank/DDBJ databases">
        <authorList>
            <consortium name="The Salmonella enterica serovar Paratyphi B Genome Sequencing Project"/>
            <person name="McClelland M."/>
            <person name="Sanderson E.K."/>
            <person name="Porwollik S."/>
            <person name="Spieth J."/>
            <person name="Clifton W.S."/>
            <person name="Fulton R."/>
            <person name="Cordes M."/>
            <person name="Wollam A."/>
            <person name="Shah N."/>
            <person name="Pepin K."/>
            <person name="Bhonagiri V."/>
            <person name="Nash W."/>
            <person name="Johnson M."/>
            <person name="Thiruvilangam P."/>
            <person name="Wilson R."/>
        </authorList>
    </citation>
    <scope>NUCLEOTIDE SEQUENCE [LARGE SCALE GENOMIC DNA]</scope>
    <source>
        <strain>ATCC BAA-1250 / SPB7</strain>
    </source>
</reference>
<dbReference type="EC" id="2.6.1.81" evidence="1"/>
<dbReference type="EMBL" id="CP000886">
    <property type="protein sequence ID" value="ABX67427.1"/>
    <property type="molecule type" value="Genomic_DNA"/>
</dbReference>
<dbReference type="RefSeq" id="WP_000059494.1">
    <property type="nucleotide sequence ID" value="NC_010102.1"/>
</dbReference>
<dbReference type="SMR" id="A9N278"/>
<dbReference type="KEGG" id="spq:SPAB_02040"/>
<dbReference type="PATRIC" id="fig|1016998.12.peg.1928"/>
<dbReference type="HOGENOM" id="CLU_016922_10_1_6"/>
<dbReference type="BioCyc" id="SENT1016998:SPAB_RS08330-MONOMER"/>
<dbReference type="UniPathway" id="UPA00185">
    <property type="reaction ID" value="UER00281"/>
</dbReference>
<dbReference type="Proteomes" id="UP000008556">
    <property type="component" value="Chromosome"/>
</dbReference>
<dbReference type="GO" id="GO:0042802">
    <property type="term" value="F:identical protein binding"/>
    <property type="evidence" value="ECO:0007669"/>
    <property type="project" value="TreeGrafter"/>
</dbReference>
<dbReference type="GO" id="GO:0030170">
    <property type="term" value="F:pyridoxal phosphate binding"/>
    <property type="evidence" value="ECO:0007669"/>
    <property type="project" value="UniProtKB-UniRule"/>
</dbReference>
<dbReference type="GO" id="GO:0043825">
    <property type="term" value="F:succinylornithine transaminase activity"/>
    <property type="evidence" value="ECO:0007669"/>
    <property type="project" value="UniProtKB-EC"/>
</dbReference>
<dbReference type="GO" id="GO:1901607">
    <property type="term" value="P:alpha-amino acid biosynthetic process"/>
    <property type="evidence" value="ECO:0007669"/>
    <property type="project" value="UniProtKB-ARBA"/>
</dbReference>
<dbReference type="GO" id="GO:0019544">
    <property type="term" value="P:arginine catabolic process to glutamate"/>
    <property type="evidence" value="ECO:0007669"/>
    <property type="project" value="UniProtKB-UniRule"/>
</dbReference>
<dbReference type="GO" id="GO:0019545">
    <property type="term" value="P:arginine catabolic process to succinate"/>
    <property type="evidence" value="ECO:0007669"/>
    <property type="project" value="UniProtKB-UniRule"/>
</dbReference>
<dbReference type="GO" id="GO:0006593">
    <property type="term" value="P:ornithine catabolic process"/>
    <property type="evidence" value="ECO:0007669"/>
    <property type="project" value="InterPro"/>
</dbReference>
<dbReference type="CDD" id="cd00610">
    <property type="entry name" value="OAT_like"/>
    <property type="match status" value="1"/>
</dbReference>
<dbReference type="FunFam" id="3.40.640.10:FF:000004">
    <property type="entry name" value="Acetylornithine aminotransferase"/>
    <property type="match status" value="1"/>
</dbReference>
<dbReference type="Gene3D" id="3.90.1150.10">
    <property type="entry name" value="Aspartate Aminotransferase, domain 1"/>
    <property type="match status" value="1"/>
</dbReference>
<dbReference type="Gene3D" id="3.40.640.10">
    <property type="entry name" value="Type I PLP-dependent aspartate aminotransferase-like (Major domain)"/>
    <property type="match status" value="1"/>
</dbReference>
<dbReference type="HAMAP" id="MF_01107">
    <property type="entry name" value="ArgD_aminotrans_3"/>
    <property type="match status" value="1"/>
</dbReference>
<dbReference type="HAMAP" id="MF_01173">
    <property type="entry name" value="AstC_aminotrans_3"/>
    <property type="match status" value="1"/>
</dbReference>
<dbReference type="InterPro" id="IPR017652">
    <property type="entry name" value="Ac/SucOrn_transaminase_bac"/>
</dbReference>
<dbReference type="InterPro" id="IPR004636">
    <property type="entry name" value="AcOrn/SuccOrn_fam"/>
</dbReference>
<dbReference type="InterPro" id="IPR005814">
    <property type="entry name" value="Aminotrans_3"/>
</dbReference>
<dbReference type="InterPro" id="IPR049704">
    <property type="entry name" value="Aminotrans_3_PPA_site"/>
</dbReference>
<dbReference type="InterPro" id="IPR050103">
    <property type="entry name" value="Class-III_PLP-dep_AT"/>
</dbReference>
<dbReference type="InterPro" id="IPR015424">
    <property type="entry name" value="PyrdxlP-dep_Trfase"/>
</dbReference>
<dbReference type="InterPro" id="IPR015421">
    <property type="entry name" value="PyrdxlP-dep_Trfase_major"/>
</dbReference>
<dbReference type="InterPro" id="IPR015422">
    <property type="entry name" value="PyrdxlP-dep_Trfase_small"/>
</dbReference>
<dbReference type="InterPro" id="IPR026330">
    <property type="entry name" value="SOAT"/>
</dbReference>
<dbReference type="NCBIfam" id="TIGR03246">
    <property type="entry name" value="arg_catab_astC"/>
    <property type="match status" value="1"/>
</dbReference>
<dbReference type="NCBIfam" id="TIGR00707">
    <property type="entry name" value="argD"/>
    <property type="match status" value="1"/>
</dbReference>
<dbReference type="NCBIfam" id="NF002325">
    <property type="entry name" value="PRK01278.1"/>
    <property type="match status" value="1"/>
</dbReference>
<dbReference type="NCBIfam" id="NF003468">
    <property type="entry name" value="PRK05093.1"/>
    <property type="match status" value="1"/>
</dbReference>
<dbReference type="NCBIfam" id="NF009047">
    <property type="entry name" value="PRK12381.1"/>
    <property type="match status" value="1"/>
</dbReference>
<dbReference type="PANTHER" id="PTHR11986">
    <property type="entry name" value="AMINOTRANSFERASE CLASS III"/>
    <property type="match status" value="1"/>
</dbReference>
<dbReference type="PANTHER" id="PTHR11986:SF113">
    <property type="entry name" value="SUCCINYLORNITHINE TRANSAMINASE"/>
    <property type="match status" value="1"/>
</dbReference>
<dbReference type="Pfam" id="PF00202">
    <property type="entry name" value="Aminotran_3"/>
    <property type="match status" value="1"/>
</dbReference>
<dbReference type="PIRSF" id="PIRSF000521">
    <property type="entry name" value="Transaminase_4ab_Lys_Orn"/>
    <property type="match status" value="1"/>
</dbReference>
<dbReference type="SUPFAM" id="SSF53383">
    <property type="entry name" value="PLP-dependent transferases"/>
    <property type="match status" value="1"/>
</dbReference>
<dbReference type="PROSITE" id="PS00600">
    <property type="entry name" value="AA_TRANSFER_CLASS_3"/>
    <property type="match status" value="1"/>
</dbReference>
<keyword id="KW-0032">Aminotransferase</keyword>
<keyword id="KW-0056">Arginine metabolism</keyword>
<keyword id="KW-0663">Pyridoxal phosphate</keyword>
<keyword id="KW-0808">Transferase</keyword>
<accession>A9N278</accession>
<gene>
    <name evidence="1" type="primary">astC</name>
    <name evidence="1" type="synonym">argM</name>
    <name type="ordered locus">SPAB_02040</name>
</gene>
<feature type="chain" id="PRO_1000164395" description="Succinylornithine transaminase">
    <location>
        <begin position="1"/>
        <end position="408"/>
    </location>
</feature>
<feature type="modified residue" description="N6-(pyridoxal phosphate)lysine" evidence="1">
    <location>
        <position position="252"/>
    </location>
</feature>
<sequence length="408" mass="43792">MSLSVTRENFDEWMVPVYVPAPFIPVRGEGSRLWDQQGKEYIDFAGGIAVNALGHAHPALREALNEQANRFWHTGNGYTNEPALRLAKKLIDATFAERVFFCNSGAEANEAALKLARKYAHDRIGNHKSGIVAFKNAFHGRTLFTVSAGGQPSYSQDFAPLPPDIRHAAYNDLNSASALIDDNTCAVIVEPVQGEGGVIPATKAFLQGLRELCDRHQALLIFDEVQTGVGRTGELYAYMHYGVTPDILTTAKALGGGFPIGAMLTTQDYASVMTPGTHGTTYGGNPLATAVAGKVLDIINTPEMQNGVRQRHDAFIERLNTINVRFGMFSEIRGLGLLLGCVLQTEFAGKAKLIAQEAAKAGVMVLIAGGDVVRFAPALNVSDEEIATGLDRFALACERLQTGGAPCG</sequence>
<protein>
    <recommendedName>
        <fullName evidence="1">Succinylornithine transaminase</fullName>
        <ecNumber evidence="1">2.6.1.81</ecNumber>
    </recommendedName>
    <alternativeName>
        <fullName evidence="1">Succinylornithine aminotransferase</fullName>
    </alternativeName>
</protein>
<organism>
    <name type="scientific">Salmonella paratyphi B (strain ATCC BAA-1250 / SPB7)</name>
    <dbReference type="NCBI Taxonomy" id="1016998"/>
    <lineage>
        <taxon>Bacteria</taxon>
        <taxon>Pseudomonadati</taxon>
        <taxon>Pseudomonadota</taxon>
        <taxon>Gammaproteobacteria</taxon>
        <taxon>Enterobacterales</taxon>
        <taxon>Enterobacteriaceae</taxon>
        <taxon>Salmonella</taxon>
    </lineage>
</organism>
<name>ASTC_SALPB</name>
<evidence type="ECO:0000255" key="1">
    <source>
        <dbReference type="HAMAP-Rule" id="MF_01173"/>
    </source>
</evidence>
<proteinExistence type="inferred from homology"/>
<comment type="function">
    <text evidence="1">Catalyzes the transamination of N(2)-succinylornithine and alpha-ketoglutarate into N(2)-succinylglutamate semialdehyde and glutamate. Can also act as an acetylornithine aminotransferase.</text>
</comment>
<comment type="catalytic activity">
    <reaction evidence="1">
        <text>N(2)-succinyl-L-ornithine + 2-oxoglutarate = N-succinyl-L-glutamate 5-semialdehyde + L-glutamate</text>
        <dbReference type="Rhea" id="RHEA:16953"/>
        <dbReference type="ChEBI" id="CHEBI:16810"/>
        <dbReference type="ChEBI" id="CHEBI:29985"/>
        <dbReference type="ChEBI" id="CHEBI:58514"/>
        <dbReference type="ChEBI" id="CHEBI:58520"/>
        <dbReference type="EC" id="2.6.1.81"/>
    </reaction>
</comment>
<comment type="cofactor">
    <cofactor evidence="1">
        <name>pyridoxal 5'-phosphate</name>
        <dbReference type="ChEBI" id="CHEBI:597326"/>
    </cofactor>
</comment>
<comment type="pathway">
    <text evidence="1">Amino-acid degradation; L-arginine degradation via AST pathway; L-glutamate and succinate from L-arginine: step 3/5.</text>
</comment>
<comment type="similarity">
    <text evidence="1">Belongs to the class-III pyridoxal-phosphate-dependent aminotransferase family. AstC subfamily.</text>
</comment>